<accession>C0Q1T7</accession>
<feature type="chain" id="PRO_0000383446" description="L-lactate dehydrogenase">
    <location>
        <begin position="1"/>
        <end position="396"/>
    </location>
</feature>
<feature type="domain" description="FMN hydroxy acid dehydrogenase" evidence="1">
    <location>
        <begin position="1"/>
        <end position="380"/>
    </location>
</feature>
<feature type="active site" description="Proton acceptor" evidence="1">
    <location>
        <position position="275"/>
    </location>
</feature>
<feature type="binding site" evidence="1">
    <location>
        <position position="24"/>
    </location>
    <ligand>
        <name>substrate</name>
    </ligand>
</feature>
<feature type="binding site" evidence="1">
    <location>
        <position position="106"/>
    </location>
    <ligand>
        <name>FMN</name>
        <dbReference type="ChEBI" id="CHEBI:58210"/>
    </ligand>
</feature>
<feature type="binding site" evidence="1">
    <location>
        <position position="127"/>
    </location>
    <ligand>
        <name>FMN</name>
        <dbReference type="ChEBI" id="CHEBI:58210"/>
    </ligand>
</feature>
<feature type="binding site" evidence="1">
    <location>
        <position position="129"/>
    </location>
    <ligand>
        <name>substrate</name>
    </ligand>
</feature>
<feature type="binding site" evidence="1">
    <location>
        <position position="155"/>
    </location>
    <ligand>
        <name>FMN</name>
        <dbReference type="ChEBI" id="CHEBI:58210"/>
    </ligand>
</feature>
<feature type="binding site" evidence="1">
    <location>
        <position position="164"/>
    </location>
    <ligand>
        <name>substrate</name>
    </ligand>
</feature>
<feature type="binding site" evidence="1">
    <location>
        <position position="251"/>
    </location>
    <ligand>
        <name>FMN</name>
        <dbReference type="ChEBI" id="CHEBI:58210"/>
    </ligand>
</feature>
<feature type="binding site" evidence="1">
    <location>
        <position position="278"/>
    </location>
    <ligand>
        <name>substrate</name>
    </ligand>
</feature>
<feature type="binding site" evidence="1">
    <location>
        <begin position="306"/>
        <end position="330"/>
    </location>
    <ligand>
        <name>FMN</name>
        <dbReference type="ChEBI" id="CHEBI:58210"/>
    </ligand>
</feature>
<gene>
    <name evidence="1" type="primary">lldD</name>
    <name type="ordered locus">SPC_3776</name>
</gene>
<proteinExistence type="inferred from homology"/>
<dbReference type="EC" id="1.1.-.-" evidence="1"/>
<dbReference type="EMBL" id="CP000857">
    <property type="protein sequence ID" value="ACN47853.1"/>
    <property type="molecule type" value="Genomic_DNA"/>
</dbReference>
<dbReference type="RefSeq" id="WP_000586999.1">
    <property type="nucleotide sequence ID" value="NC_012125.1"/>
</dbReference>
<dbReference type="SMR" id="C0Q1T7"/>
<dbReference type="KEGG" id="sei:SPC_3776"/>
<dbReference type="HOGENOM" id="CLU_020639_0_0_6"/>
<dbReference type="Proteomes" id="UP000001599">
    <property type="component" value="Chromosome"/>
</dbReference>
<dbReference type="GO" id="GO:0005886">
    <property type="term" value="C:plasma membrane"/>
    <property type="evidence" value="ECO:0007669"/>
    <property type="project" value="UniProtKB-SubCell"/>
</dbReference>
<dbReference type="GO" id="GO:0010181">
    <property type="term" value="F:FMN binding"/>
    <property type="evidence" value="ECO:0007669"/>
    <property type="project" value="InterPro"/>
</dbReference>
<dbReference type="GO" id="GO:0004459">
    <property type="term" value="F:L-lactate dehydrogenase activity"/>
    <property type="evidence" value="ECO:0007669"/>
    <property type="project" value="UniProtKB-UniRule"/>
</dbReference>
<dbReference type="GO" id="GO:0009060">
    <property type="term" value="P:aerobic respiration"/>
    <property type="evidence" value="ECO:0007669"/>
    <property type="project" value="TreeGrafter"/>
</dbReference>
<dbReference type="GO" id="GO:0006089">
    <property type="term" value="P:lactate metabolic process"/>
    <property type="evidence" value="ECO:0007669"/>
    <property type="project" value="UniProtKB-UniRule"/>
</dbReference>
<dbReference type="CDD" id="cd02809">
    <property type="entry name" value="alpha_hydroxyacid_oxid_FMN"/>
    <property type="match status" value="1"/>
</dbReference>
<dbReference type="FunFam" id="3.20.20.70:FF:000029">
    <property type="entry name" value="L-lactate dehydrogenase"/>
    <property type="match status" value="1"/>
</dbReference>
<dbReference type="Gene3D" id="3.20.20.70">
    <property type="entry name" value="Aldolase class I"/>
    <property type="match status" value="1"/>
</dbReference>
<dbReference type="HAMAP" id="MF_01559">
    <property type="entry name" value="L_lact_dehydr"/>
    <property type="match status" value="1"/>
</dbReference>
<dbReference type="InterPro" id="IPR013785">
    <property type="entry name" value="Aldolase_TIM"/>
</dbReference>
<dbReference type="InterPro" id="IPR012133">
    <property type="entry name" value="Alpha-hydoxy_acid_DH_FMN"/>
</dbReference>
<dbReference type="InterPro" id="IPR000262">
    <property type="entry name" value="FMN-dep_DH"/>
</dbReference>
<dbReference type="InterPro" id="IPR037396">
    <property type="entry name" value="FMN_HAD"/>
</dbReference>
<dbReference type="InterPro" id="IPR008259">
    <property type="entry name" value="FMN_hydac_DH_AS"/>
</dbReference>
<dbReference type="InterPro" id="IPR020920">
    <property type="entry name" value="LldD"/>
</dbReference>
<dbReference type="NCBIfam" id="NF033901">
    <property type="entry name" value="L_lactate_LldD"/>
    <property type="match status" value="1"/>
</dbReference>
<dbReference type="NCBIfam" id="NF008398">
    <property type="entry name" value="PRK11197.1"/>
    <property type="match status" value="1"/>
</dbReference>
<dbReference type="PANTHER" id="PTHR10578:SF85">
    <property type="entry name" value="L-LACTATE DEHYDROGENASE"/>
    <property type="match status" value="1"/>
</dbReference>
<dbReference type="PANTHER" id="PTHR10578">
    <property type="entry name" value="S -2-HYDROXY-ACID OXIDASE-RELATED"/>
    <property type="match status" value="1"/>
</dbReference>
<dbReference type="Pfam" id="PF01070">
    <property type="entry name" value="FMN_dh"/>
    <property type="match status" value="1"/>
</dbReference>
<dbReference type="PIRSF" id="PIRSF000138">
    <property type="entry name" value="Al-hdrx_acd_dh"/>
    <property type="match status" value="1"/>
</dbReference>
<dbReference type="SUPFAM" id="SSF51395">
    <property type="entry name" value="FMN-linked oxidoreductases"/>
    <property type="match status" value="1"/>
</dbReference>
<dbReference type="PROSITE" id="PS00557">
    <property type="entry name" value="FMN_HYDROXY_ACID_DH_1"/>
    <property type="match status" value="1"/>
</dbReference>
<dbReference type="PROSITE" id="PS51349">
    <property type="entry name" value="FMN_HYDROXY_ACID_DH_2"/>
    <property type="match status" value="1"/>
</dbReference>
<organism>
    <name type="scientific">Salmonella paratyphi C (strain RKS4594)</name>
    <dbReference type="NCBI Taxonomy" id="476213"/>
    <lineage>
        <taxon>Bacteria</taxon>
        <taxon>Pseudomonadati</taxon>
        <taxon>Pseudomonadota</taxon>
        <taxon>Gammaproteobacteria</taxon>
        <taxon>Enterobacterales</taxon>
        <taxon>Enterobacteriaceae</taxon>
        <taxon>Salmonella</taxon>
    </lineage>
</organism>
<reference key="1">
    <citation type="journal article" date="2009" name="PLoS ONE">
        <title>Salmonella paratyphi C: genetic divergence from Salmonella choleraesuis and pathogenic convergence with Salmonella typhi.</title>
        <authorList>
            <person name="Liu W.-Q."/>
            <person name="Feng Y."/>
            <person name="Wang Y."/>
            <person name="Zou Q.-H."/>
            <person name="Chen F."/>
            <person name="Guo J.-T."/>
            <person name="Peng Y.-H."/>
            <person name="Jin Y."/>
            <person name="Li Y.-G."/>
            <person name="Hu S.-N."/>
            <person name="Johnston R.N."/>
            <person name="Liu G.-R."/>
            <person name="Liu S.-L."/>
        </authorList>
    </citation>
    <scope>NUCLEOTIDE SEQUENCE [LARGE SCALE GENOMIC DNA]</scope>
    <source>
        <strain>RKS4594</strain>
    </source>
</reference>
<protein>
    <recommendedName>
        <fullName evidence="1">L-lactate dehydrogenase</fullName>
        <ecNumber evidence="1">1.1.-.-</ecNumber>
    </recommendedName>
</protein>
<keyword id="KW-0997">Cell inner membrane</keyword>
<keyword id="KW-1003">Cell membrane</keyword>
<keyword id="KW-0285">Flavoprotein</keyword>
<keyword id="KW-0288">FMN</keyword>
<keyword id="KW-0472">Membrane</keyword>
<keyword id="KW-0560">Oxidoreductase</keyword>
<name>LLDD_SALPC</name>
<comment type="function">
    <text evidence="1">Catalyzes the conversion of L-lactate to pyruvate. Is coupled to the respiratory chain.</text>
</comment>
<comment type="catalytic activity">
    <reaction evidence="1">
        <text>(S)-lactate + A = pyruvate + AH2</text>
        <dbReference type="Rhea" id="RHEA:45816"/>
        <dbReference type="ChEBI" id="CHEBI:13193"/>
        <dbReference type="ChEBI" id="CHEBI:15361"/>
        <dbReference type="ChEBI" id="CHEBI:16651"/>
        <dbReference type="ChEBI" id="CHEBI:17499"/>
    </reaction>
</comment>
<comment type="cofactor">
    <cofactor evidence="1">
        <name>FMN</name>
        <dbReference type="ChEBI" id="CHEBI:58210"/>
    </cofactor>
</comment>
<comment type="subcellular location">
    <subcellularLocation>
        <location evidence="1">Cell inner membrane</location>
        <topology evidence="1">Peripheral membrane protein</topology>
    </subcellularLocation>
</comment>
<comment type="similarity">
    <text evidence="1">Belongs to the FMN-dependent alpha-hydroxy acid dehydrogenase family.</text>
</comment>
<evidence type="ECO:0000255" key="1">
    <source>
        <dbReference type="HAMAP-Rule" id="MF_01559"/>
    </source>
</evidence>
<sequence length="396" mass="42728">MIISAASDYRAAAQRTLPPFLFHYIDGGAYAEYTLRRNVEDLSQVALRQRVLKNMSDLSLETTLFNETLSMPVALAPVGLCGMYARRGEVQAAAAADAKGIPFTLSTVSVCPIEEVAPTIQRPMWFQLYVLRDRGFMRNALERAKAAGCSTLVFTVDMPTPGARYRDAHSGMSGPNAAMRRYWQAVMHPKWAWDVGLNGRPHDLGNISAYLGKPTGLEDYIGWLANNFDPSISWKDLEWIREFWDGPMVIKGLLDPEDARDAVRFGADGIVVSNHGGRQLDGVLSSARALPAIADAVKGDIAILADSGIRNGLDVVRMIALGADTVLLGRAYLYALATAGKAGVANLLDLIEKEMKVAMTLTGAKTISEISGDSLVQELGKSLPAALAPMSKGDAA</sequence>